<sequence>MISKINGKLFADMIIQGAQNLSNNADLVDSLNVYPVPDGDTGTNMNLTMTSGREEVENNLSKNIGELGKTFSKGLLMGARGNSGVILSQLFRGFCKNIESESEINSKLLAESFQAGVETAYKAVMKPVEGTILTVAKDAAQAAIEKANNTEDCIELMEYIIVKANESLENTPNLLAVLKEVGVVDSGGKGLLCVYEGFLKALKGEKVEAKVAKIDKDEFVHDEHDFHGVINTEDIIYGYCTEMMVRFGKNKKAFDEQEFRQDMSQFGDSLLVINDEEIVKVHVHTEYPGKVFNYGQQYGELIKLKVENMREQHREVIRKEQHTAKPKMETVETAIITISMGEGISEIFKSMGATHIISGGQTMNPSTEDIVKVIEQSKCKRAIILPNNKNILMASEQAASIVDAEAVVIPTKSIPQGISALFQYDVDATLEENKAQMADSVNNVKSGSLTYAVRDTKIDGVEIKKDAFMGLIEDKIVSSQSDQLTTVTELLNEMLAEDSEILTVIIGQDAEQAVTDNMINWIEEQYPDVEVEVHEGGQPIYQYFFSVE</sequence>
<feature type="chain" id="PRO_0000304158" description="Uncharacterized protein SAS1160">
    <location>
        <begin position="1"/>
        <end position="548"/>
    </location>
</feature>
<feature type="domain" description="DhaL" evidence="1">
    <location>
        <begin position="8"/>
        <end position="200"/>
    </location>
</feature>
<evidence type="ECO:0000255" key="1">
    <source>
        <dbReference type="PROSITE-ProRule" id="PRU00813"/>
    </source>
</evidence>
<organism>
    <name type="scientific">Staphylococcus aureus (strain MSSA476)</name>
    <dbReference type="NCBI Taxonomy" id="282459"/>
    <lineage>
        <taxon>Bacteria</taxon>
        <taxon>Bacillati</taxon>
        <taxon>Bacillota</taxon>
        <taxon>Bacilli</taxon>
        <taxon>Bacillales</taxon>
        <taxon>Staphylococcaceae</taxon>
        <taxon>Staphylococcus</taxon>
    </lineage>
</organism>
<accession>Q6G9Y7</accession>
<dbReference type="EMBL" id="BX571857">
    <property type="protein sequence ID" value="CAG42937.1"/>
    <property type="molecule type" value="Genomic_DNA"/>
</dbReference>
<dbReference type="SMR" id="Q6G9Y7"/>
<dbReference type="KEGG" id="sas:SAS1160"/>
<dbReference type="HOGENOM" id="CLU_017496_1_0_9"/>
<dbReference type="GO" id="GO:0004371">
    <property type="term" value="F:glycerone kinase activity"/>
    <property type="evidence" value="ECO:0007669"/>
    <property type="project" value="InterPro"/>
</dbReference>
<dbReference type="GO" id="GO:0006071">
    <property type="term" value="P:glycerol metabolic process"/>
    <property type="evidence" value="ECO:0007669"/>
    <property type="project" value="InterPro"/>
</dbReference>
<dbReference type="Gene3D" id="1.25.40.340">
    <property type="match status" value="1"/>
</dbReference>
<dbReference type="InterPro" id="IPR050270">
    <property type="entry name" value="DegV_domain_contain"/>
</dbReference>
<dbReference type="InterPro" id="IPR004007">
    <property type="entry name" value="DhaL_dom"/>
</dbReference>
<dbReference type="InterPro" id="IPR036117">
    <property type="entry name" value="DhaL_dom_sf"/>
</dbReference>
<dbReference type="InterPro" id="IPR033470">
    <property type="entry name" value="FakA-like_C"/>
</dbReference>
<dbReference type="InterPro" id="IPR048394">
    <property type="entry name" value="FakA-like_M"/>
</dbReference>
<dbReference type="InterPro" id="IPR019986">
    <property type="entry name" value="YloV-like"/>
</dbReference>
<dbReference type="NCBIfam" id="NF038248">
    <property type="entry name" value="FakA_VfrB"/>
    <property type="match status" value="1"/>
</dbReference>
<dbReference type="NCBIfam" id="TIGR03599">
    <property type="entry name" value="YloV"/>
    <property type="match status" value="1"/>
</dbReference>
<dbReference type="PANTHER" id="PTHR33434">
    <property type="entry name" value="DEGV DOMAIN-CONTAINING PROTEIN DR_1986-RELATED"/>
    <property type="match status" value="1"/>
</dbReference>
<dbReference type="PANTHER" id="PTHR33434:SF4">
    <property type="entry name" value="PHOSPHATASE PROTEIN"/>
    <property type="match status" value="1"/>
</dbReference>
<dbReference type="Pfam" id="PF02734">
    <property type="entry name" value="Dak2"/>
    <property type="match status" value="1"/>
</dbReference>
<dbReference type="Pfam" id="PF13684">
    <property type="entry name" value="FakA-like_C"/>
    <property type="match status" value="1"/>
</dbReference>
<dbReference type="Pfam" id="PF21645">
    <property type="entry name" value="FakA-like_M"/>
    <property type="match status" value="1"/>
</dbReference>
<dbReference type="SMART" id="SM01121">
    <property type="entry name" value="Dak1_2"/>
    <property type="match status" value="1"/>
</dbReference>
<dbReference type="SMART" id="SM01120">
    <property type="entry name" value="Dak2"/>
    <property type="match status" value="1"/>
</dbReference>
<dbReference type="SUPFAM" id="SSF101473">
    <property type="entry name" value="DhaL-like"/>
    <property type="match status" value="1"/>
</dbReference>
<dbReference type="PROSITE" id="PS51480">
    <property type="entry name" value="DHAL"/>
    <property type="match status" value="1"/>
</dbReference>
<protein>
    <recommendedName>
        <fullName>Uncharacterized protein SAS1160</fullName>
    </recommendedName>
</protein>
<proteinExistence type="predicted"/>
<reference key="1">
    <citation type="journal article" date="2004" name="Proc. Natl. Acad. Sci. U.S.A.">
        <title>Complete genomes of two clinical Staphylococcus aureus strains: evidence for the rapid evolution of virulence and drug resistance.</title>
        <authorList>
            <person name="Holden M.T.G."/>
            <person name="Feil E.J."/>
            <person name="Lindsay J.A."/>
            <person name="Peacock S.J."/>
            <person name="Day N.P.J."/>
            <person name="Enright M.C."/>
            <person name="Foster T.J."/>
            <person name="Moore C.E."/>
            <person name="Hurst L."/>
            <person name="Atkin R."/>
            <person name="Barron A."/>
            <person name="Bason N."/>
            <person name="Bentley S.D."/>
            <person name="Chillingworth C."/>
            <person name="Chillingworth T."/>
            <person name="Churcher C."/>
            <person name="Clark L."/>
            <person name="Corton C."/>
            <person name="Cronin A."/>
            <person name="Doggett J."/>
            <person name="Dowd L."/>
            <person name="Feltwell T."/>
            <person name="Hance Z."/>
            <person name="Harris B."/>
            <person name="Hauser H."/>
            <person name="Holroyd S."/>
            <person name="Jagels K."/>
            <person name="James K.D."/>
            <person name="Lennard N."/>
            <person name="Line A."/>
            <person name="Mayes R."/>
            <person name="Moule S."/>
            <person name="Mungall K."/>
            <person name="Ormond D."/>
            <person name="Quail M.A."/>
            <person name="Rabbinowitsch E."/>
            <person name="Rutherford K.M."/>
            <person name="Sanders M."/>
            <person name="Sharp S."/>
            <person name="Simmonds M."/>
            <person name="Stevens K."/>
            <person name="Whitehead S."/>
            <person name="Barrell B.G."/>
            <person name="Spratt B.G."/>
            <person name="Parkhill J."/>
        </authorList>
    </citation>
    <scope>NUCLEOTIDE SEQUENCE [LARGE SCALE GENOMIC DNA]</scope>
    <source>
        <strain>MSSA476</strain>
    </source>
</reference>
<gene>
    <name type="ordered locus">SAS1160</name>
</gene>
<name>Y1160_STAAS</name>